<feature type="chain" id="PRO_1000128108" description="Small ribosomal subunit protein uS9">
    <location>
        <begin position="1"/>
        <end position="130"/>
    </location>
</feature>
<feature type="region of interest" description="Disordered" evidence="2">
    <location>
        <begin position="102"/>
        <end position="130"/>
    </location>
</feature>
<feature type="compositionally biased region" description="Basic residues" evidence="2">
    <location>
        <begin position="111"/>
        <end position="130"/>
    </location>
</feature>
<sequence length="130" mass="14673">MAKVQYFGTGRRKKSVARVRLVAGDGKVIINNRDIENYFPIETLRVIVNQPLVLTETKDKYDVLVNVHGGGFTGQAGAVRHGISRALVKADENMKSSLKKAGFLTRDPRMKERKKYGLKKARRSPQFSKR</sequence>
<gene>
    <name evidence="1" type="primary">rpsI</name>
    <name type="ordered locus">CLK_2888</name>
</gene>
<keyword id="KW-0687">Ribonucleoprotein</keyword>
<keyword id="KW-0689">Ribosomal protein</keyword>
<name>RS9_CLOBM</name>
<reference key="1">
    <citation type="journal article" date="2007" name="PLoS ONE">
        <title>Analysis of the neurotoxin complex genes in Clostridium botulinum A1-A4 and B1 strains: BoNT/A3, /Ba4 and /B1 clusters are located within plasmids.</title>
        <authorList>
            <person name="Smith T.J."/>
            <person name="Hill K.K."/>
            <person name="Foley B.T."/>
            <person name="Detter J.C."/>
            <person name="Munk A.C."/>
            <person name="Bruce D.C."/>
            <person name="Doggett N.A."/>
            <person name="Smith L.A."/>
            <person name="Marks J.D."/>
            <person name="Xie G."/>
            <person name="Brettin T.S."/>
        </authorList>
    </citation>
    <scope>NUCLEOTIDE SEQUENCE [LARGE SCALE GENOMIC DNA]</scope>
    <source>
        <strain>Loch Maree / Type A3</strain>
    </source>
</reference>
<evidence type="ECO:0000255" key="1">
    <source>
        <dbReference type="HAMAP-Rule" id="MF_00532"/>
    </source>
</evidence>
<evidence type="ECO:0000256" key="2">
    <source>
        <dbReference type="SAM" id="MobiDB-lite"/>
    </source>
</evidence>
<evidence type="ECO:0000305" key="3"/>
<dbReference type="EMBL" id="CP000962">
    <property type="protein sequence ID" value="ACA54535.1"/>
    <property type="molecule type" value="Genomic_DNA"/>
</dbReference>
<dbReference type="RefSeq" id="WP_003357662.1">
    <property type="nucleotide sequence ID" value="NC_010520.1"/>
</dbReference>
<dbReference type="SMR" id="B1KSI9"/>
<dbReference type="GeneID" id="5184277"/>
<dbReference type="KEGG" id="cbl:CLK_2888"/>
<dbReference type="HOGENOM" id="CLU_046483_2_1_9"/>
<dbReference type="GO" id="GO:0022627">
    <property type="term" value="C:cytosolic small ribosomal subunit"/>
    <property type="evidence" value="ECO:0007669"/>
    <property type="project" value="TreeGrafter"/>
</dbReference>
<dbReference type="GO" id="GO:0003723">
    <property type="term" value="F:RNA binding"/>
    <property type="evidence" value="ECO:0007669"/>
    <property type="project" value="TreeGrafter"/>
</dbReference>
<dbReference type="GO" id="GO:0003735">
    <property type="term" value="F:structural constituent of ribosome"/>
    <property type="evidence" value="ECO:0007669"/>
    <property type="project" value="InterPro"/>
</dbReference>
<dbReference type="GO" id="GO:0006412">
    <property type="term" value="P:translation"/>
    <property type="evidence" value="ECO:0007669"/>
    <property type="project" value="UniProtKB-UniRule"/>
</dbReference>
<dbReference type="FunFam" id="3.30.230.10:FF:000001">
    <property type="entry name" value="30S ribosomal protein S9"/>
    <property type="match status" value="1"/>
</dbReference>
<dbReference type="Gene3D" id="3.30.230.10">
    <property type="match status" value="1"/>
</dbReference>
<dbReference type="HAMAP" id="MF_00532_B">
    <property type="entry name" value="Ribosomal_uS9_B"/>
    <property type="match status" value="1"/>
</dbReference>
<dbReference type="InterPro" id="IPR020568">
    <property type="entry name" value="Ribosomal_Su5_D2-typ_SF"/>
</dbReference>
<dbReference type="InterPro" id="IPR000754">
    <property type="entry name" value="Ribosomal_uS9"/>
</dbReference>
<dbReference type="InterPro" id="IPR023035">
    <property type="entry name" value="Ribosomal_uS9_bac/plastid"/>
</dbReference>
<dbReference type="InterPro" id="IPR020574">
    <property type="entry name" value="Ribosomal_uS9_CS"/>
</dbReference>
<dbReference type="InterPro" id="IPR014721">
    <property type="entry name" value="Ribsml_uS5_D2-typ_fold_subgr"/>
</dbReference>
<dbReference type="NCBIfam" id="NF001099">
    <property type="entry name" value="PRK00132.1"/>
    <property type="match status" value="1"/>
</dbReference>
<dbReference type="PANTHER" id="PTHR21569">
    <property type="entry name" value="RIBOSOMAL PROTEIN S9"/>
    <property type="match status" value="1"/>
</dbReference>
<dbReference type="PANTHER" id="PTHR21569:SF1">
    <property type="entry name" value="SMALL RIBOSOMAL SUBUNIT PROTEIN US9M"/>
    <property type="match status" value="1"/>
</dbReference>
<dbReference type="Pfam" id="PF00380">
    <property type="entry name" value="Ribosomal_S9"/>
    <property type="match status" value="1"/>
</dbReference>
<dbReference type="SUPFAM" id="SSF54211">
    <property type="entry name" value="Ribosomal protein S5 domain 2-like"/>
    <property type="match status" value="1"/>
</dbReference>
<dbReference type="PROSITE" id="PS00360">
    <property type="entry name" value="RIBOSOMAL_S9"/>
    <property type="match status" value="1"/>
</dbReference>
<proteinExistence type="inferred from homology"/>
<accession>B1KSI9</accession>
<protein>
    <recommendedName>
        <fullName evidence="1">Small ribosomal subunit protein uS9</fullName>
    </recommendedName>
    <alternativeName>
        <fullName evidence="3">30S ribosomal protein S9</fullName>
    </alternativeName>
</protein>
<comment type="similarity">
    <text evidence="1">Belongs to the universal ribosomal protein uS9 family.</text>
</comment>
<organism>
    <name type="scientific">Clostridium botulinum (strain Loch Maree / Type A3)</name>
    <dbReference type="NCBI Taxonomy" id="498214"/>
    <lineage>
        <taxon>Bacteria</taxon>
        <taxon>Bacillati</taxon>
        <taxon>Bacillota</taxon>
        <taxon>Clostridia</taxon>
        <taxon>Eubacteriales</taxon>
        <taxon>Clostridiaceae</taxon>
        <taxon>Clostridium</taxon>
    </lineage>
</organism>